<proteinExistence type="evidence at protein level"/>
<dbReference type="EMBL" id="AY029808">
    <property type="protein sequence ID" value="AAK37404.1"/>
    <property type="molecule type" value="mRNA"/>
</dbReference>
<dbReference type="EMBL" id="AF395809">
    <property type="protein sequence ID" value="AAK83380.1"/>
    <property type="status" value="ALT_INIT"/>
    <property type="molecule type" value="mRNA"/>
</dbReference>
<dbReference type="EMBL" id="BX571796">
    <property type="status" value="NOT_ANNOTATED_CDS"/>
    <property type="molecule type" value="Genomic_DNA"/>
</dbReference>
<dbReference type="RefSeq" id="NP_571102.2">
    <property type="nucleotide sequence ID" value="NM_131027.2"/>
</dbReference>
<dbReference type="PDB" id="4C79">
    <property type="method" value="X-ray"/>
    <property type="resolution" value="2.60 A"/>
    <property type="chains" value="A/B=28-210"/>
</dbReference>
<dbReference type="PDB" id="4C7A">
    <property type="method" value="X-ray"/>
    <property type="resolution" value="2.30 A"/>
    <property type="chains" value="A/B=28-210"/>
</dbReference>
<dbReference type="PDBsum" id="4C79"/>
<dbReference type="PDBsum" id="4C7A"/>
<dbReference type="SMR" id="Q5RH73"/>
<dbReference type="FunCoup" id="Q5RH73">
    <property type="interactions" value="1759"/>
</dbReference>
<dbReference type="STRING" id="7955.ENSDARP00000013486"/>
<dbReference type="PaxDb" id="7955-ENSDARP00000013486"/>
<dbReference type="Ensembl" id="ENSDART00000005985">
    <property type="protein sequence ID" value="ENSDARP00000013486"/>
    <property type="gene ID" value="ENSDARG00000002952"/>
</dbReference>
<dbReference type="GeneID" id="30225"/>
<dbReference type="KEGG" id="dre:30225"/>
<dbReference type="AGR" id="ZFIN:ZDB-GENE-980526-89"/>
<dbReference type="CTD" id="6608"/>
<dbReference type="ZFIN" id="ZDB-GENE-980526-89">
    <property type="gene designation" value="smo"/>
</dbReference>
<dbReference type="eggNOG" id="KOG3577">
    <property type="taxonomic scope" value="Eukaryota"/>
</dbReference>
<dbReference type="HOGENOM" id="CLU_007873_3_1_1"/>
<dbReference type="InParanoid" id="Q5RH73"/>
<dbReference type="OMA" id="HCEPLRY"/>
<dbReference type="OrthoDB" id="10064659at2759"/>
<dbReference type="PhylomeDB" id="Q5RH73"/>
<dbReference type="TreeFam" id="TF106460"/>
<dbReference type="SignaLink" id="Q90X26"/>
<dbReference type="EvolutionaryTrace" id="Q5RH73"/>
<dbReference type="PRO" id="PR:Q5RH73"/>
<dbReference type="Proteomes" id="UP000000437">
    <property type="component" value="Chromosome 4"/>
</dbReference>
<dbReference type="Bgee" id="ENSDARG00000002952">
    <property type="expression patterns" value="Expressed in gastrula and 35 other cell types or tissues"/>
</dbReference>
<dbReference type="GO" id="GO:0005929">
    <property type="term" value="C:cilium"/>
    <property type="evidence" value="ECO:0000314"/>
    <property type="project" value="ZFIN"/>
</dbReference>
<dbReference type="GO" id="GO:0030425">
    <property type="term" value="C:dendrite"/>
    <property type="evidence" value="ECO:0000318"/>
    <property type="project" value="GO_Central"/>
</dbReference>
<dbReference type="GO" id="GO:0005886">
    <property type="term" value="C:plasma membrane"/>
    <property type="evidence" value="ECO:0000250"/>
    <property type="project" value="UniProtKB"/>
</dbReference>
<dbReference type="GO" id="GO:0004930">
    <property type="term" value="F:G protein-coupled receptor activity"/>
    <property type="evidence" value="ECO:0007669"/>
    <property type="project" value="UniProtKB-KW"/>
</dbReference>
<dbReference type="GO" id="GO:0008142">
    <property type="term" value="F:oxysterol binding"/>
    <property type="evidence" value="ECO:0000314"/>
    <property type="project" value="ZFIN"/>
</dbReference>
<dbReference type="GO" id="GO:0005113">
    <property type="term" value="F:patched binding"/>
    <property type="evidence" value="ECO:0000318"/>
    <property type="project" value="GO_Central"/>
</dbReference>
<dbReference type="GO" id="GO:0034236">
    <property type="term" value="F:protein kinase A catalytic subunit binding"/>
    <property type="evidence" value="ECO:0000250"/>
    <property type="project" value="UniProtKB"/>
</dbReference>
<dbReference type="GO" id="GO:0140311">
    <property type="term" value="F:protein sequestering activity"/>
    <property type="evidence" value="ECO:0000250"/>
    <property type="project" value="UniProtKB"/>
</dbReference>
<dbReference type="GO" id="GO:0021984">
    <property type="term" value="P:adenohypophysis development"/>
    <property type="evidence" value="ECO:0000315"/>
    <property type="project" value="ZFIN"/>
</dbReference>
<dbReference type="GO" id="GO:0035479">
    <property type="term" value="P:angioblast cell migration from lateral mesoderm to midline"/>
    <property type="evidence" value="ECO:0000315"/>
    <property type="project" value="ZFIN"/>
</dbReference>
<dbReference type="GO" id="GO:0009952">
    <property type="term" value="P:anterior/posterior pattern specification"/>
    <property type="evidence" value="ECO:0000315"/>
    <property type="project" value="ZFIN"/>
</dbReference>
<dbReference type="GO" id="GO:0060844">
    <property type="term" value="P:arterial endothelial cell fate commitment"/>
    <property type="evidence" value="ECO:0000315"/>
    <property type="project" value="ZFIN"/>
</dbReference>
<dbReference type="GO" id="GO:0007411">
    <property type="term" value="P:axon guidance"/>
    <property type="evidence" value="ECO:0000315"/>
    <property type="project" value="ZFIN"/>
</dbReference>
<dbReference type="GO" id="GO:0003231">
    <property type="term" value="P:cardiac ventricle development"/>
    <property type="evidence" value="ECO:0000315"/>
    <property type="project" value="ZFIN"/>
</dbReference>
<dbReference type="GO" id="GO:0010002">
    <property type="term" value="P:cardioblast differentiation"/>
    <property type="evidence" value="ECO:0000315"/>
    <property type="project" value="ZFIN"/>
</dbReference>
<dbReference type="GO" id="GO:0051216">
    <property type="term" value="P:cartilage development"/>
    <property type="evidence" value="ECO:0000315"/>
    <property type="project" value="ZFIN"/>
</dbReference>
<dbReference type="GO" id="GO:0035143">
    <property type="term" value="P:caudal fin morphogenesis"/>
    <property type="evidence" value="ECO:0000315"/>
    <property type="project" value="ZFIN"/>
</dbReference>
<dbReference type="GO" id="GO:0007417">
    <property type="term" value="P:central nervous system development"/>
    <property type="evidence" value="ECO:0000315"/>
    <property type="project" value="ZFIN"/>
</dbReference>
<dbReference type="GO" id="GO:0021587">
    <property type="term" value="P:cerebellum morphogenesis"/>
    <property type="evidence" value="ECO:0000315"/>
    <property type="project" value="ZFIN"/>
</dbReference>
<dbReference type="GO" id="GO:0071679">
    <property type="term" value="P:commissural neuron axon guidance"/>
    <property type="evidence" value="ECO:0000315"/>
    <property type="project" value="ZFIN"/>
</dbReference>
<dbReference type="GO" id="GO:0021536">
    <property type="term" value="P:diencephalon development"/>
    <property type="evidence" value="ECO:0000316"/>
    <property type="project" value="ZFIN"/>
</dbReference>
<dbReference type="GO" id="GO:0035912">
    <property type="term" value="P:dorsal aorta morphogenesis"/>
    <property type="evidence" value="ECO:0000315"/>
    <property type="project" value="ZFIN"/>
</dbReference>
<dbReference type="GO" id="GO:0031076">
    <property type="term" value="P:embryonic camera-type eye development"/>
    <property type="evidence" value="ECO:0000314"/>
    <property type="project" value="ZFIN"/>
</dbReference>
<dbReference type="GO" id="GO:0048557">
    <property type="term" value="P:embryonic digestive tract morphogenesis"/>
    <property type="evidence" value="ECO:0000315"/>
    <property type="project" value="ZFIN"/>
</dbReference>
<dbReference type="GO" id="GO:0048702">
    <property type="term" value="P:embryonic neurocranium morphogenesis"/>
    <property type="evidence" value="ECO:0000315"/>
    <property type="project" value="ZFIN"/>
</dbReference>
<dbReference type="GO" id="GO:0009880">
    <property type="term" value="P:embryonic pattern specification"/>
    <property type="evidence" value="ECO:0000315"/>
    <property type="project" value="ZFIN"/>
</dbReference>
<dbReference type="GO" id="GO:0048703">
    <property type="term" value="P:embryonic viscerocranium morphogenesis"/>
    <property type="evidence" value="ECO:0000315"/>
    <property type="project" value="ZFIN"/>
</dbReference>
<dbReference type="GO" id="GO:0060956">
    <property type="term" value="P:endocardial cell differentiation"/>
    <property type="evidence" value="ECO:0000315"/>
    <property type="project" value="ZFIN"/>
</dbReference>
<dbReference type="GO" id="GO:0031018">
    <property type="term" value="P:endocrine pancreas development"/>
    <property type="evidence" value="ECO:0000315"/>
    <property type="project" value="ZFIN"/>
</dbReference>
<dbReference type="GO" id="GO:0035270">
    <property type="term" value="P:endocrine system development"/>
    <property type="evidence" value="ECO:0000315"/>
    <property type="project" value="ZFIN"/>
</dbReference>
<dbReference type="GO" id="GO:0072175">
    <property type="term" value="P:epithelial tube formation"/>
    <property type="evidence" value="ECO:0000315"/>
    <property type="project" value="ZFIN"/>
</dbReference>
<dbReference type="GO" id="GO:0031017">
    <property type="term" value="P:exocrine pancreas development"/>
    <property type="evidence" value="ECO:0000315"/>
    <property type="project" value="UniProtKB"/>
</dbReference>
<dbReference type="GO" id="GO:0021508">
    <property type="term" value="P:floor plate formation"/>
    <property type="evidence" value="ECO:0000316"/>
    <property type="project" value="ZFIN"/>
</dbReference>
<dbReference type="GO" id="GO:0030900">
    <property type="term" value="P:forebrain development"/>
    <property type="evidence" value="ECO:0000315"/>
    <property type="project" value="ZFIN"/>
</dbReference>
<dbReference type="GO" id="GO:0021798">
    <property type="term" value="P:forebrain dorsal/ventral pattern formation"/>
    <property type="evidence" value="ECO:0000315"/>
    <property type="project" value="ZFIN"/>
</dbReference>
<dbReference type="GO" id="GO:0021782">
    <property type="term" value="P:glial cell development"/>
    <property type="evidence" value="ECO:0000315"/>
    <property type="project" value="ZFIN"/>
</dbReference>
<dbReference type="GO" id="GO:0021986">
    <property type="term" value="P:habenula development"/>
    <property type="evidence" value="ECO:0000315"/>
    <property type="project" value="ZFIN"/>
</dbReference>
<dbReference type="GO" id="GO:0001947">
    <property type="term" value="P:heart looping"/>
    <property type="evidence" value="ECO:0000315"/>
    <property type="project" value="ZFIN"/>
</dbReference>
<dbReference type="GO" id="GO:0030902">
    <property type="term" value="P:hindbrain development"/>
    <property type="evidence" value="ECO:0000315"/>
    <property type="project" value="ZFIN"/>
</dbReference>
<dbReference type="GO" id="GO:0048839">
    <property type="term" value="P:inner ear development"/>
    <property type="evidence" value="ECO:0000315"/>
    <property type="project" value="ZFIN"/>
</dbReference>
<dbReference type="GO" id="GO:0042472">
    <property type="term" value="P:inner ear morphogenesis"/>
    <property type="evidence" value="ECO:0000315"/>
    <property type="project" value="ZFIN"/>
</dbReference>
<dbReference type="GO" id="GO:0042693">
    <property type="term" value="P:muscle cell fate commitment"/>
    <property type="evidence" value="ECO:0000315"/>
    <property type="project" value="ZFIN"/>
</dbReference>
<dbReference type="GO" id="GO:0007517">
    <property type="term" value="P:muscle organ development"/>
    <property type="evidence" value="ECO:0000315"/>
    <property type="project" value="ZFIN"/>
</dbReference>
<dbReference type="GO" id="GO:0030239">
    <property type="term" value="P:myofibril assembly"/>
    <property type="evidence" value="ECO:0000315"/>
    <property type="project" value="ZFIN"/>
</dbReference>
<dbReference type="GO" id="GO:0001933">
    <property type="term" value="P:negative regulation of protein phosphorylation"/>
    <property type="evidence" value="ECO:0000250"/>
    <property type="project" value="UniProtKB"/>
</dbReference>
<dbReference type="GO" id="GO:0007399">
    <property type="term" value="P:nervous system development"/>
    <property type="evidence" value="ECO:0000315"/>
    <property type="project" value="ZFIN"/>
</dbReference>
<dbReference type="GO" id="GO:0014033">
    <property type="term" value="P:neural crest cell differentiation"/>
    <property type="evidence" value="ECO:0000315"/>
    <property type="project" value="ZFIN"/>
</dbReference>
<dbReference type="GO" id="GO:0001839">
    <property type="term" value="P:neural plate morphogenesis"/>
    <property type="evidence" value="ECO:0000315"/>
    <property type="project" value="ZFIN"/>
</dbReference>
<dbReference type="GO" id="GO:0060896">
    <property type="term" value="P:neural plate pattern specification"/>
    <property type="evidence" value="ECO:0000315"/>
    <property type="project" value="ZFIN"/>
</dbReference>
<dbReference type="GO" id="GO:0030182">
    <property type="term" value="P:neuron differentiation"/>
    <property type="evidence" value="ECO:0000315"/>
    <property type="project" value="ZFIN"/>
</dbReference>
<dbReference type="GO" id="GO:0048663">
    <property type="term" value="P:neuron fate commitment"/>
    <property type="evidence" value="ECO:0000315"/>
    <property type="project" value="ZFIN"/>
</dbReference>
<dbReference type="GO" id="GO:0014003">
    <property type="term" value="P:oligodendrocyte development"/>
    <property type="evidence" value="ECO:0000315"/>
    <property type="project" value="ZFIN"/>
</dbReference>
<dbReference type="GO" id="GO:0032474">
    <property type="term" value="P:otolith morphogenesis"/>
    <property type="evidence" value="ECO:0000315"/>
    <property type="project" value="ZFIN"/>
</dbReference>
<dbReference type="GO" id="GO:0031016">
    <property type="term" value="P:pancreas development"/>
    <property type="evidence" value="ECO:0000315"/>
    <property type="project" value="ZFIN"/>
</dbReference>
<dbReference type="GO" id="GO:0007389">
    <property type="term" value="P:pattern specification process"/>
    <property type="evidence" value="ECO:0000318"/>
    <property type="project" value="GO_Central"/>
</dbReference>
<dbReference type="GO" id="GO:0045880">
    <property type="term" value="P:positive regulation of smoothened signaling pathway"/>
    <property type="evidence" value="ECO:0000315"/>
    <property type="project" value="ZFIN"/>
</dbReference>
<dbReference type="GO" id="GO:0043113">
    <property type="term" value="P:receptor clustering"/>
    <property type="evidence" value="ECO:0000315"/>
    <property type="project" value="ZFIN"/>
</dbReference>
<dbReference type="GO" id="GO:0060041">
    <property type="term" value="P:retina development in camera-type eye"/>
    <property type="evidence" value="ECO:0000315"/>
    <property type="project" value="ZFIN"/>
</dbReference>
<dbReference type="GO" id="GO:0031290">
    <property type="term" value="P:retinal ganglion cell axon guidance"/>
    <property type="evidence" value="ECO:0000315"/>
    <property type="project" value="ZFIN"/>
</dbReference>
<dbReference type="GO" id="GO:0048752">
    <property type="term" value="P:semicircular canal morphogenesis"/>
    <property type="evidence" value="ECO:0000315"/>
    <property type="project" value="ZFIN"/>
</dbReference>
<dbReference type="GO" id="GO:0048741">
    <property type="term" value="P:skeletal muscle fiber development"/>
    <property type="evidence" value="ECO:0000315"/>
    <property type="project" value="ZFIN"/>
</dbReference>
<dbReference type="GO" id="GO:0048745">
    <property type="term" value="P:smooth muscle tissue development"/>
    <property type="evidence" value="ECO:0000315"/>
    <property type="project" value="ZFIN"/>
</dbReference>
<dbReference type="GO" id="GO:0007224">
    <property type="term" value="P:smoothened signaling pathway"/>
    <property type="evidence" value="ECO:0000315"/>
    <property type="project" value="ZFIN"/>
</dbReference>
<dbReference type="GO" id="GO:0021523">
    <property type="term" value="P:somatic motor neuron differentiation"/>
    <property type="evidence" value="ECO:0000315"/>
    <property type="project" value="ZFIN"/>
</dbReference>
<dbReference type="GO" id="GO:0061053">
    <property type="term" value="P:somite development"/>
    <property type="evidence" value="ECO:0000315"/>
    <property type="project" value="ZFIN"/>
</dbReference>
<dbReference type="GO" id="GO:0021520">
    <property type="term" value="P:spinal cord motor neuron cell fate specification"/>
    <property type="evidence" value="ECO:0000315"/>
    <property type="project" value="ZFIN"/>
</dbReference>
<dbReference type="GO" id="GO:0021522">
    <property type="term" value="P:spinal cord motor neuron differentiation"/>
    <property type="evidence" value="ECO:0000315"/>
    <property type="project" value="ZFIN"/>
</dbReference>
<dbReference type="GO" id="GO:0055002">
    <property type="term" value="P:striated muscle cell development"/>
    <property type="evidence" value="ECO:0000315"/>
    <property type="project" value="ZFIN"/>
</dbReference>
<dbReference type="GO" id="GO:0048794">
    <property type="term" value="P:swim bladder development"/>
    <property type="evidence" value="ECO:0000315"/>
    <property type="project" value="ZFIN"/>
</dbReference>
<dbReference type="GO" id="GO:0048795">
    <property type="term" value="P:swim bladder morphogenesis"/>
    <property type="evidence" value="ECO:0000315"/>
    <property type="project" value="ZFIN"/>
</dbReference>
<dbReference type="GO" id="GO:0021537">
    <property type="term" value="P:telencephalon development"/>
    <property type="evidence" value="ECO:0000315"/>
    <property type="project" value="ZFIN"/>
</dbReference>
<dbReference type="GO" id="GO:0001570">
    <property type="term" value="P:vasculogenesis"/>
    <property type="evidence" value="ECO:0000315"/>
    <property type="project" value="ZFIN"/>
</dbReference>
<dbReference type="CDD" id="cd15030">
    <property type="entry name" value="7tmF_SMO_homolog"/>
    <property type="match status" value="1"/>
</dbReference>
<dbReference type="CDD" id="cd07451">
    <property type="entry name" value="CRD_SMO"/>
    <property type="match status" value="1"/>
</dbReference>
<dbReference type="FunFam" id="1.10.2000.10:FF:000010">
    <property type="entry name" value="Smoothened, frizzled class receptor"/>
    <property type="match status" value="1"/>
</dbReference>
<dbReference type="FunFam" id="1.20.1070.10:FF:000068">
    <property type="entry name" value="Smoothened, frizzled class receptor"/>
    <property type="match status" value="1"/>
</dbReference>
<dbReference type="Gene3D" id="1.10.2000.10">
    <property type="entry name" value="Frizzled cysteine-rich domain"/>
    <property type="match status" value="1"/>
</dbReference>
<dbReference type="Gene3D" id="1.20.1070.10">
    <property type="entry name" value="Rhodopsin 7-helix transmembrane proteins"/>
    <property type="match status" value="1"/>
</dbReference>
<dbReference type="InterPro" id="IPR015526">
    <property type="entry name" value="Frizzled/SFRP"/>
</dbReference>
<dbReference type="InterPro" id="IPR000539">
    <property type="entry name" value="Frizzled/Smoothened_7TM"/>
</dbReference>
<dbReference type="InterPro" id="IPR020067">
    <property type="entry name" value="Frizzled_dom"/>
</dbReference>
<dbReference type="InterPro" id="IPR036790">
    <property type="entry name" value="Frizzled_dom_sf"/>
</dbReference>
<dbReference type="InterPro" id="IPR017981">
    <property type="entry name" value="GPCR_2-like_7TM"/>
</dbReference>
<dbReference type="InterPro" id="IPR035683">
    <property type="entry name" value="SMO_7TM"/>
</dbReference>
<dbReference type="InterPro" id="IPR041771">
    <property type="entry name" value="SMO_CRD"/>
</dbReference>
<dbReference type="PANTHER" id="PTHR11309">
    <property type="entry name" value="FRIZZLED"/>
    <property type="match status" value="1"/>
</dbReference>
<dbReference type="PANTHER" id="PTHR11309:SF35">
    <property type="entry name" value="PROTEIN SMOOTHENED"/>
    <property type="match status" value="1"/>
</dbReference>
<dbReference type="Pfam" id="PF01534">
    <property type="entry name" value="Frizzled"/>
    <property type="match status" value="1"/>
</dbReference>
<dbReference type="Pfam" id="PF01392">
    <property type="entry name" value="Fz"/>
    <property type="match status" value="1"/>
</dbReference>
<dbReference type="PRINTS" id="PR00489">
    <property type="entry name" value="FRIZZLED"/>
</dbReference>
<dbReference type="SMART" id="SM00063">
    <property type="entry name" value="FRI"/>
    <property type="match status" value="1"/>
</dbReference>
<dbReference type="SMART" id="SM01330">
    <property type="entry name" value="Frizzled"/>
    <property type="match status" value="1"/>
</dbReference>
<dbReference type="SUPFAM" id="SSF63501">
    <property type="entry name" value="Frizzled cysteine-rich domain"/>
    <property type="match status" value="1"/>
</dbReference>
<dbReference type="PROSITE" id="PS50038">
    <property type="entry name" value="FZ"/>
    <property type="match status" value="1"/>
</dbReference>
<dbReference type="PROSITE" id="PS50261">
    <property type="entry name" value="G_PROTEIN_RECEP_F2_4"/>
    <property type="match status" value="1"/>
</dbReference>
<name>SMO_DANRE</name>
<accession>Q5RH73</accession>
<accession>A0A8N1Z117</accession>
<accession>Q90X26</accession>
<keyword id="KW-0002">3D-structure</keyword>
<keyword id="KW-1003">Cell membrane</keyword>
<keyword id="KW-0966">Cell projection</keyword>
<keyword id="KW-0217">Developmental protein</keyword>
<keyword id="KW-1015">Disulfide bond</keyword>
<keyword id="KW-0297">G-protein coupled receptor</keyword>
<keyword id="KW-0325">Glycoprotein</keyword>
<keyword id="KW-0472">Membrane</keyword>
<keyword id="KW-0675">Receptor</keyword>
<keyword id="KW-1185">Reference proteome</keyword>
<keyword id="KW-0732">Signal</keyword>
<keyword id="KW-0807">Transducer</keyword>
<keyword id="KW-0812">Transmembrane</keyword>
<keyword id="KW-1133">Transmembrane helix</keyword>
<comment type="function">
    <text evidence="1 7 8 9 10 11 12 13 14 15 17 19 20 22">G protein-coupled receptor which associates with the patched protein (ptch) to transduce Hedgehog protein signaling. Binding of sonic hedgehog (shh) to its receptor patched prevents inhibition of smoothened (smo) by patched. When active, smo binds to and sequesters protein kinase A catalytic subunit prkaca at the cell membrane, preventing prkaca-mediated phosphorylation of gli transcription factors which releases the gli proteins from prkaca-mediated inhibition and allows for transcriptional activation of Hedgehog signaling pathway target genes (By similarity). Required for the development of primary and secondary motoneurons but not for the specification of midbrain dopaminergic neurons or development of the medial floor plate (PubMed:11493557). Required for induction of lateral floor plate and posterior motoneurons, anterior neural plate patterning, dorsoventral forebrain patterning, dorsoventral retinal patterning, optic stalk development, and formation of the forebrain primary axonal scaffold (PubMed:11566855). Required to regulate the formation of a subset of cerebellar neurons by limiting wnt1 expression which controls cerebellar expression of transcription factor olig2 (PubMed:18423594). Required for development of the pancreas (PubMed:34087472). Required for muscle development (PubMed:16136078). Required for the formation of a single continuous intestinal lumen from multiple discontinuous lumens, probably by regulating remodeling through rab11a-mediated trafficking to facilitate lumen fusion (PubMed:24504339). Required for development of the adenohypophysis (PubMed:11566855, PubMed:12606279). Required for anteroposterior patterning of the otic vesicle (PubMed:12588855). Required for development of the anterior craniofacial skeleton (PubMed:16481351). Required for patterning of the caudal fin (PubMed:17597528). Required during gastrulation and early somitogenesis stages to promote cardiomyocyte formation by regulating the specification of myocardial progenitors (PubMed:18842815). Required for induction of arterial endothelial cell formation by repressing venous cell fate (PubMed:20193674).</text>
</comment>
<comment type="subunit">
    <text evidence="18">Monomer.</text>
</comment>
<comment type="subcellular location">
    <subcellularLocation>
        <location evidence="1">Cell membrane</location>
        <topology evidence="3">Multi-pass membrane protein</topology>
    </subcellularLocation>
    <subcellularLocation>
        <location evidence="1">Cell projection</location>
        <location evidence="1">Cilium</location>
    </subcellularLocation>
    <text evidence="1">Cilium localization is promoted by shh and is required for activity.</text>
</comment>
<comment type="developmental stage">
    <text evidence="7 8 13">Expressed from the beginning of embryogenesis and during gastrula stages with widespread expression during early gastrulation (PubMed:11493557, PubMed:11566855). As epiboly continues, a shallow dorsoventral gradient begins to appear around the embryonic shield stage at 5-6 hours post-fertilization (hpf) with higher levels seen in the future organizer region (PubMed:11493557). At the tail bud stage, expression is down-regulated in the non-neural ectoderm and is found only in the neural plate and axial mesoderm with higher levels seen in the future head and tail domains (PubMed:11493557). As somitogenesis proceeds, the expression domain on the dorsal side expands laterally to adaxial mesoderm and somites (PubMed:11493557). At 26 hpf, high levels of expression are found in the ventral diencephalon, epiphysis, tectum and pectoral fin buds (PubMed:11493557). Expressed at higher levels in the head than the rest of the body at the 18-somite stage and at 24 hpf (PubMed:11566855). By 2 days post-fertilization (dpf), expression in the head is confined to dorsal brain nuclei and jaw cartilages and expression is also seen in the pectoral fin (PubMed:11566855). Also expressed in cells of the caudal fin primordium during development (PubMed:17597528).</text>
</comment>
<comment type="domain">
    <text evidence="1 18">The N-terminal extracellular domain mediates sterol-binding which is required for maximal activation of signaling (PubMed:24171105). Contains a second sterol-binding site within the seven-transmembrane pocket which is also required for activation (By similarity). The activating sterol is likely to be cholesterol (By similarity). The extracellular site is required for shh-induced activity while the site within the transmembrane pocket regulates basal signaling in the absence of shh (By similarity).</text>
</comment>
<comment type="disruption phenotype">
    <text evidence="7 17">Abnormalities in body size, abnormal development of the central nervous system, adaxial mesoderm, cartilage and pectoral fins, and reduced expression of ptc1 and foxa2/axial with most mutant embryos dying by the end of day 4 although some survive to day 6 (PubMed:11493557). Expansion of venous cells with a reciprocal loss of arterial cells (PubMed:20193674).</text>
</comment>
<comment type="similarity">
    <text evidence="22">Belongs to the G-protein coupled receptor Fz/Smo family.</text>
</comment>
<comment type="sequence caution" evidence="22">
    <conflict type="erroneous initiation">
        <sequence resource="EMBL-CDS" id="AAK83380"/>
    </conflict>
    <text>Truncated N-terminus.</text>
</comment>
<evidence type="ECO:0000250" key="1">
    <source>
        <dbReference type="UniProtKB" id="P56726"/>
    </source>
</evidence>
<evidence type="ECO:0000250" key="2">
    <source>
        <dbReference type="UniProtKB" id="Q99835"/>
    </source>
</evidence>
<evidence type="ECO:0000255" key="3"/>
<evidence type="ECO:0000255" key="4">
    <source>
        <dbReference type="PROSITE-ProRule" id="PRU00090"/>
    </source>
</evidence>
<evidence type="ECO:0000255" key="5">
    <source>
        <dbReference type="PROSITE-ProRule" id="PRU00498"/>
    </source>
</evidence>
<evidence type="ECO:0000256" key="6">
    <source>
        <dbReference type="SAM" id="MobiDB-lite"/>
    </source>
</evidence>
<evidence type="ECO:0000269" key="7">
    <source>
    </source>
</evidence>
<evidence type="ECO:0000269" key="8">
    <source>
    </source>
</evidence>
<evidence type="ECO:0000269" key="9">
    <source>
    </source>
</evidence>
<evidence type="ECO:0000269" key="10">
    <source>
    </source>
</evidence>
<evidence type="ECO:0000269" key="11">
    <source>
    </source>
</evidence>
<evidence type="ECO:0000269" key="12">
    <source>
    </source>
</evidence>
<evidence type="ECO:0000269" key="13">
    <source>
    </source>
</evidence>
<evidence type="ECO:0000269" key="14">
    <source>
    </source>
</evidence>
<evidence type="ECO:0000269" key="15">
    <source>
    </source>
</evidence>
<evidence type="ECO:0000269" key="16">
    <source>
    </source>
</evidence>
<evidence type="ECO:0000269" key="17">
    <source>
    </source>
</evidence>
<evidence type="ECO:0000269" key="18">
    <source>
    </source>
</evidence>
<evidence type="ECO:0000269" key="19">
    <source>
    </source>
</evidence>
<evidence type="ECO:0000269" key="20">
    <source>
    </source>
</evidence>
<evidence type="ECO:0000303" key="21">
    <source>
    </source>
</evidence>
<evidence type="ECO:0000305" key="22"/>
<evidence type="ECO:0000312" key="23">
    <source>
        <dbReference type="EMBL" id="AAK37404.1"/>
    </source>
</evidence>
<evidence type="ECO:0000312" key="24">
    <source>
        <dbReference type="EMBL" id="AAK83380.1"/>
    </source>
</evidence>
<evidence type="ECO:0000312" key="25">
    <source>
        <dbReference type="ZFIN" id="ZDB-GENE-980526-89"/>
    </source>
</evidence>
<evidence type="ECO:0007744" key="26">
    <source>
        <dbReference type="PDB" id="4C79"/>
    </source>
</evidence>
<evidence type="ECO:0007744" key="27">
    <source>
        <dbReference type="PDB" id="4C7A"/>
    </source>
</evidence>
<evidence type="ECO:0007829" key="28">
    <source>
        <dbReference type="PDB" id="4C79"/>
    </source>
</evidence>
<evidence type="ECO:0007829" key="29">
    <source>
        <dbReference type="PDB" id="4C7A"/>
    </source>
</evidence>
<reference evidence="23" key="1">
    <citation type="journal article" date="2001" name="Development">
        <title>Analysis of the zebrafish smoothened mutant reveals conserved and divergent functions of hedgehog activity.</title>
        <authorList>
            <person name="Chen W."/>
            <person name="Burgess S."/>
            <person name="Hopkins N."/>
        </authorList>
    </citation>
    <scope>NUCLEOTIDE SEQUENCE [MRNA]</scope>
    <scope>FUNCTION</scope>
    <scope>DEVELOPMENTAL STAGE</scope>
    <scope>DISRUPTION PHENOTYPE</scope>
</reference>
<reference evidence="24" key="2">
    <citation type="journal article" date="2001" name="Development">
        <title>Zebrafish smoothened functions in ventral neural tube specification and axon tract formation.</title>
        <authorList>
            <person name="Varga Z.M."/>
            <person name="Amores A."/>
            <person name="Lewis K.E."/>
            <person name="Yan Y.L."/>
            <person name="Postlethwait J.H."/>
            <person name="Eisen J.S."/>
            <person name="Westerfield M."/>
        </authorList>
    </citation>
    <scope>NUCLEOTIDE SEQUENCE [MRNA]</scope>
    <scope>FUNCTION</scope>
    <scope>DEVELOPMENTAL STAGE</scope>
    <scope>MUTAGENESIS OF GLY-256 AND ARG-379</scope>
</reference>
<reference evidence="22" key="3">
    <citation type="journal article" date="2013" name="Nature">
        <title>The zebrafish reference genome sequence and its relationship to the human genome.</title>
        <authorList>
            <person name="Howe K."/>
            <person name="Clark M.D."/>
            <person name="Torroja C.F."/>
            <person name="Torrance J."/>
            <person name="Berthelot C."/>
            <person name="Muffato M."/>
            <person name="Collins J.E."/>
            <person name="Humphray S."/>
            <person name="McLaren K."/>
            <person name="Matthews L."/>
            <person name="McLaren S."/>
            <person name="Sealy I."/>
            <person name="Caccamo M."/>
            <person name="Churcher C."/>
            <person name="Scott C."/>
            <person name="Barrett J.C."/>
            <person name="Koch R."/>
            <person name="Rauch G.J."/>
            <person name="White S."/>
            <person name="Chow W."/>
            <person name="Kilian B."/>
            <person name="Quintais L.T."/>
            <person name="Guerra-Assuncao J.A."/>
            <person name="Zhou Y."/>
            <person name="Gu Y."/>
            <person name="Yen J."/>
            <person name="Vogel J.H."/>
            <person name="Eyre T."/>
            <person name="Redmond S."/>
            <person name="Banerjee R."/>
            <person name="Chi J."/>
            <person name="Fu B."/>
            <person name="Langley E."/>
            <person name="Maguire S.F."/>
            <person name="Laird G.K."/>
            <person name="Lloyd D."/>
            <person name="Kenyon E."/>
            <person name="Donaldson S."/>
            <person name="Sehra H."/>
            <person name="Almeida-King J."/>
            <person name="Loveland J."/>
            <person name="Trevanion S."/>
            <person name="Jones M."/>
            <person name="Quail M."/>
            <person name="Willey D."/>
            <person name="Hunt A."/>
            <person name="Burton J."/>
            <person name="Sims S."/>
            <person name="McLay K."/>
            <person name="Plumb B."/>
            <person name="Davis J."/>
            <person name="Clee C."/>
            <person name="Oliver K."/>
            <person name="Clark R."/>
            <person name="Riddle C."/>
            <person name="Elliot D."/>
            <person name="Threadgold G."/>
            <person name="Harden G."/>
            <person name="Ware D."/>
            <person name="Begum S."/>
            <person name="Mortimore B."/>
            <person name="Kerry G."/>
            <person name="Heath P."/>
            <person name="Phillimore B."/>
            <person name="Tracey A."/>
            <person name="Corby N."/>
            <person name="Dunn M."/>
            <person name="Johnson C."/>
            <person name="Wood J."/>
            <person name="Clark S."/>
            <person name="Pelan S."/>
            <person name="Griffiths G."/>
            <person name="Smith M."/>
            <person name="Glithero R."/>
            <person name="Howden P."/>
            <person name="Barker N."/>
            <person name="Lloyd C."/>
            <person name="Stevens C."/>
            <person name="Harley J."/>
            <person name="Holt K."/>
            <person name="Panagiotidis G."/>
            <person name="Lovell J."/>
            <person name="Beasley H."/>
            <person name="Henderson C."/>
            <person name="Gordon D."/>
            <person name="Auger K."/>
            <person name="Wright D."/>
            <person name="Collins J."/>
            <person name="Raisen C."/>
            <person name="Dyer L."/>
            <person name="Leung K."/>
            <person name="Robertson L."/>
            <person name="Ambridge K."/>
            <person name="Leongamornlert D."/>
            <person name="McGuire S."/>
            <person name="Gilderthorp R."/>
            <person name="Griffiths C."/>
            <person name="Manthravadi D."/>
            <person name="Nichol S."/>
            <person name="Barker G."/>
            <person name="Whitehead S."/>
            <person name="Kay M."/>
            <person name="Brown J."/>
            <person name="Murnane C."/>
            <person name="Gray E."/>
            <person name="Humphries M."/>
            <person name="Sycamore N."/>
            <person name="Barker D."/>
            <person name="Saunders D."/>
            <person name="Wallis J."/>
            <person name="Babbage A."/>
            <person name="Hammond S."/>
            <person name="Mashreghi-Mohammadi M."/>
            <person name="Barr L."/>
            <person name="Martin S."/>
            <person name="Wray P."/>
            <person name="Ellington A."/>
            <person name="Matthews N."/>
            <person name="Ellwood M."/>
            <person name="Woodmansey R."/>
            <person name="Clark G."/>
            <person name="Cooper J."/>
            <person name="Tromans A."/>
            <person name="Grafham D."/>
            <person name="Skuce C."/>
            <person name="Pandian R."/>
            <person name="Andrews R."/>
            <person name="Harrison E."/>
            <person name="Kimberley A."/>
            <person name="Garnett J."/>
            <person name="Fosker N."/>
            <person name="Hall R."/>
            <person name="Garner P."/>
            <person name="Kelly D."/>
            <person name="Bird C."/>
            <person name="Palmer S."/>
            <person name="Gehring I."/>
            <person name="Berger A."/>
            <person name="Dooley C.M."/>
            <person name="Ersan-Urun Z."/>
            <person name="Eser C."/>
            <person name="Geiger H."/>
            <person name="Geisler M."/>
            <person name="Karotki L."/>
            <person name="Kirn A."/>
            <person name="Konantz J."/>
            <person name="Konantz M."/>
            <person name="Oberlander M."/>
            <person name="Rudolph-Geiger S."/>
            <person name="Teucke M."/>
            <person name="Lanz C."/>
            <person name="Raddatz G."/>
            <person name="Osoegawa K."/>
            <person name="Zhu B."/>
            <person name="Rapp A."/>
            <person name="Widaa S."/>
            <person name="Langford C."/>
            <person name="Yang F."/>
            <person name="Schuster S.C."/>
            <person name="Carter N.P."/>
            <person name="Harrow J."/>
            <person name="Ning Z."/>
            <person name="Herrero J."/>
            <person name="Searle S.M."/>
            <person name="Enright A."/>
            <person name="Geisler R."/>
            <person name="Plasterk R.H."/>
            <person name="Lee C."/>
            <person name="Westerfield M."/>
            <person name="de Jong P.J."/>
            <person name="Zon L.I."/>
            <person name="Postlethwait J.H."/>
            <person name="Nusslein-Volhard C."/>
            <person name="Hubbard T.J."/>
            <person name="Roest Crollius H."/>
            <person name="Rogers J."/>
            <person name="Stemple D.L."/>
        </authorList>
    </citation>
    <scope>NUCLEOTIDE SEQUENCE [LARGE SCALE GENOMIC DNA]</scope>
    <source>
        <strain>Tuebingen</strain>
    </source>
</reference>
<reference evidence="22" key="4">
    <citation type="journal article" date="2003" name="Dev. Biol.">
        <title>Multiple roles for Hedgehog signaling in zebrafish pituitary development.</title>
        <authorList>
            <person name="Sbrogna J.L."/>
            <person name="Barresi M.J."/>
            <person name="Karlstrom R.O."/>
        </authorList>
    </citation>
    <scope>FUNCTION</scope>
    <scope>MUTAGENESIS OF GLY-256</scope>
</reference>
<reference evidence="22" key="5">
    <citation type="journal article" date="2003" name="Development">
        <title>Hedgehog signalling is required for correct anteroposterior patterning of the zebrafish otic vesicle.</title>
        <authorList>
            <person name="Hammond K.L."/>
            <person name="Loynes H.E."/>
            <person name="Folarin A.A."/>
            <person name="Smith J."/>
            <person name="Whitfield T.T."/>
        </authorList>
    </citation>
    <scope>FUNCTION</scope>
    <scope>MUTAGENESIS OF GLY-256</scope>
</reference>
<reference evidence="22" key="6">
    <citation type="journal article" date="2005" name="Nature">
        <title>Vertebrate Smoothened functions at the primary cilium.</title>
        <authorList>
            <person name="Corbit K.C."/>
            <person name="Aanstad P."/>
            <person name="Singla V."/>
            <person name="Norman A.R."/>
            <person name="Stainier D.Y."/>
            <person name="Reiter J.F."/>
        </authorList>
    </citation>
    <scope>FUNCTION</scope>
    <scope>MUTAGENESIS OF GLY-256</scope>
</reference>
<reference evidence="22" key="7">
    <citation type="journal article" date="2006" name="Development">
        <title>Early Hedgehog signaling from neural to oral epithelium organizes anterior craniofacial development.</title>
        <authorList>
            <person name="Eberhart J.K."/>
            <person name="Swartz M.E."/>
            <person name="Crump J.G."/>
            <person name="Kimmel C.B."/>
        </authorList>
    </citation>
    <scope>FUNCTION</scope>
    <scope>MUTAGENESIS OF ARG-379</scope>
</reference>
<reference evidence="22" key="8">
    <citation type="journal article" date="2007" name="BMC Dev. Biol.">
        <title>Hedgehog signaling patterns the outgrowth of unpaired skeletal appendages in zebrafish.</title>
        <authorList>
            <person name="Hadzhiev Y."/>
            <person name="Lele Z."/>
            <person name="Schindler S."/>
            <person name="Wilson S.W."/>
            <person name="Ahlberg P."/>
            <person name="Straehle U."/>
            <person name="Mueller F."/>
        </authorList>
    </citation>
    <scope>FUNCTION</scope>
    <scope>DEVELOPMENTAL STAGE</scope>
</reference>
<reference evidence="22" key="9">
    <citation type="journal article" date="2008" name="Dev. Biol.">
        <title>Hh and Wnt signaling regulate formation of olig2+ neurons in the zebrafish cerebellum.</title>
        <authorList>
            <person name="McFarland K.A."/>
            <person name="Topczewska J.M."/>
            <person name="Weidinger G."/>
            <person name="Dorsky R.I."/>
            <person name="Appel B."/>
        </authorList>
    </citation>
    <scope>FUNCTION</scope>
    <scope>MUTAGENESIS OF GLY-256</scope>
</reference>
<reference evidence="22" key="10">
    <citation type="journal article" date="2008" name="Development">
        <title>Hedgehog signaling plays a cell-autonomous role in maximizing cardiac developmental potential.</title>
        <authorList>
            <person name="Thomas N.A."/>
            <person name="Koudijs M."/>
            <person name="van Eeden F.J."/>
            <person name="Joyner A.L."/>
            <person name="Yelon D."/>
        </authorList>
    </citation>
    <scope>FUNCTION</scope>
    <scope>MUTAGENESIS OF ARG-379</scope>
</reference>
<reference evidence="22" key="11">
    <citation type="journal article" date="2009" name="Curr. Biol.">
        <title>The extracellular domain of Smoothened regulates ciliary localization and is required for high-level Hh signaling.</title>
        <authorList>
            <person name="Aanstad P."/>
            <person name="Santos N."/>
            <person name="Corbit K.C."/>
            <person name="Scherz P.J."/>
            <person name="Trinh L.A."/>
            <person name="Salvenmoser W."/>
            <person name="Huisken J."/>
            <person name="Reiter J.F."/>
            <person name="Stainier D.Y."/>
        </authorList>
    </citation>
    <scope>MUTAGENESIS OF CYS-125</scope>
</reference>
<reference evidence="22" key="12">
    <citation type="journal article" date="2010" name="Dev. Biol.">
        <title>Hedgehog signaling induces arterial endothelial cell formation by repressing venous cell fate.</title>
        <authorList>
            <person name="Williams C."/>
            <person name="Kim S.H."/>
            <person name="Ni T.T."/>
            <person name="Mitchell L."/>
            <person name="Ro H."/>
            <person name="Penn J.S."/>
            <person name="Baldwin S.H."/>
            <person name="Solnica-Krezel L."/>
            <person name="Zhong T.P."/>
        </authorList>
    </citation>
    <scope>FUNCTION</scope>
    <scope>DISRUPTION PHENOTYPE</scope>
</reference>
<reference evidence="22" key="13">
    <citation type="journal article" date="2014" name="Development">
        <title>Single continuous lumen formation in the zebrafish gut is mediated by smoothened-dependent tissue remodeling.</title>
        <authorList>
            <person name="Alvers A.L."/>
            <person name="Ryan S."/>
            <person name="Scherz P.J."/>
            <person name="Huisken J."/>
            <person name="Bagnat M."/>
        </authorList>
    </citation>
    <scope>FUNCTION</scope>
    <scope>MUTAGENESIS OF CYS-125</scope>
</reference>
<reference evidence="22" key="14">
    <citation type="journal article" date="2021" name="Gene Expr. Patterns">
        <title>The development of zebrafish pancreas affected by deficiency of Hedgehog signaling.</title>
        <authorList>
            <person name="Korzh S."/>
            <person name="Winata C.L."/>
            <person name="Gong Z."/>
            <person name="Korzh V."/>
        </authorList>
    </citation>
    <scope>FUNCTION</scope>
    <scope>MUTAGENESIS OF GLY-256</scope>
</reference>
<reference evidence="26 27" key="15">
    <citation type="journal article" date="2013" name="Elife">
        <title>Structure and function of the Smoothened extracellular domain in vertebrate Hedgehog signaling.</title>
        <authorList>
            <person name="Nachtergaele S."/>
            <person name="Whalen D.M."/>
            <person name="Mydock L.K."/>
            <person name="Zhao Z."/>
            <person name="Malinauskas T."/>
            <person name="Krishnan K."/>
            <person name="Ingham P.W."/>
            <person name="Covey D.F."/>
            <person name="Siebold C."/>
            <person name="Rohatgi R."/>
        </authorList>
    </citation>
    <scope>X-RAY CRYSTALLOGRAPHY (2.30 ANGSTROMS) OF 28-210</scope>
    <scope>SUBUNIT</scope>
    <scope>DOMAIN</scope>
    <scope>DISULFIDE BONDS</scope>
</reference>
<feature type="signal peptide" evidence="3">
    <location>
        <begin position="1"/>
        <end position="28"/>
    </location>
</feature>
<feature type="chain" id="PRO_5004261392" description="Protein smoothened" evidence="3">
    <location>
        <begin position="29"/>
        <end position="822"/>
    </location>
</feature>
<feature type="topological domain" description="Extracellular" evidence="22">
    <location>
        <begin position="29"/>
        <end position="212"/>
    </location>
</feature>
<feature type="transmembrane region" description="Helical; Name=1" evidence="3">
    <location>
        <begin position="213"/>
        <end position="233"/>
    </location>
</feature>
<feature type="topological domain" description="Cytoplasmic" evidence="22">
    <location>
        <begin position="234"/>
        <end position="241"/>
    </location>
</feature>
<feature type="transmembrane region" description="Helical; Name=2" evidence="3">
    <location>
        <begin position="242"/>
        <end position="262"/>
    </location>
</feature>
<feature type="topological domain" description="Extracellular" evidence="22">
    <location>
        <begin position="263"/>
        <end position="293"/>
    </location>
</feature>
<feature type="transmembrane region" description="Helical; Name=3" evidence="3">
    <location>
        <begin position="294"/>
        <end position="314"/>
    </location>
</feature>
<feature type="topological domain" description="Cytoplasmic" evidence="22">
    <location>
        <begin position="315"/>
        <end position="335"/>
    </location>
</feature>
<feature type="transmembrane region" description="Helical; Name=4" evidence="3">
    <location>
        <begin position="336"/>
        <end position="356"/>
    </location>
</feature>
<feature type="topological domain" description="Extracellular" evidence="22">
    <location>
        <begin position="357"/>
        <end position="381"/>
    </location>
</feature>
<feature type="transmembrane region" description="Helical; Name=5" evidence="3">
    <location>
        <begin position="382"/>
        <end position="402"/>
    </location>
</feature>
<feature type="topological domain" description="Cytoplasmic" evidence="22">
    <location>
        <begin position="403"/>
        <end position="430"/>
    </location>
</feature>
<feature type="transmembrane region" description="Helical; Name=6" evidence="3">
    <location>
        <begin position="431"/>
        <end position="451"/>
    </location>
</feature>
<feature type="topological domain" description="Extracellular" evidence="22">
    <location>
        <begin position="452"/>
        <end position="503"/>
    </location>
</feature>
<feature type="transmembrane region" description="Helical; Name=7" evidence="3">
    <location>
        <begin position="504"/>
        <end position="524"/>
    </location>
</feature>
<feature type="topological domain" description="Cytoplasmic" evidence="22">
    <location>
        <begin position="525"/>
        <end position="822"/>
    </location>
</feature>
<feature type="domain" description="FZ" evidence="4">
    <location>
        <begin position="43"/>
        <end position="160"/>
    </location>
</feature>
<feature type="region of interest" description="Disordered" evidence="6">
    <location>
        <begin position="645"/>
        <end position="687"/>
    </location>
</feature>
<feature type="compositionally biased region" description="Basic residues" evidence="6">
    <location>
        <begin position="647"/>
        <end position="658"/>
    </location>
</feature>
<feature type="binding site" evidence="1">
    <location>
        <position position="73"/>
    </location>
    <ligand>
        <name>cholesterol</name>
        <dbReference type="ChEBI" id="CHEBI:16113"/>
    </ligand>
</feature>
<feature type="binding site" evidence="1">
    <location>
        <position position="373"/>
    </location>
    <ligand>
        <name>cholesterol</name>
        <dbReference type="ChEBI" id="CHEBI:16113"/>
    </ligand>
</feature>
<feature type="glycosylation site" description="N-linked (GlcNAc...) asparagine" evidence="5">
    <location>
        <position position="34"/>
    </location>
</feature>
<feature type="glycosylation site" description="N-linked (GlcNAc...) asparagine" evidence="5">
    <location>
        <position position="167"/>
    </location>
</feature>
<feature type="glycosylation site" description="N-linked (GlcNAc...) asparagine" evidence="5">
    <location>
        <position position="472"/>
    </location>
</feature>
<feature type="disulfide bond" evidence="18 26 27">
    <location>
        <begin position="42"/>
        <end position="157"/>
    </location>
</feature>
<feature type="disulfide bond" evidence="4 18 26 27">
    <location>
        <begin position="48"/>
        <end position="112"/>
    </location>
</feature>
<feature type="disulfide bond" evidence="4 18 26 27">
    <location>
        <begin position="56"/>
        <end position="105"/>
    </location>
</feature>
<feature type="disulfide bond" evidence="4 18 26 27">
    <location>
        <begin position="96"/>
        <end position="132"/>
    </location>
</feature>
<feature type="disulfide bond" evidence="4 18 26 27">
    <location>
        <begin position="125"/>
        <end position="147"/>
    </location>
</feature>
<feature type="disulfide bond" evidence="2">
    <location>
        <begin position="172"/>
        <end position="192"/>
    </location>
</feature>
<feature type="disulfide bond" evidence="2">
    <location>
        <begin position="196"/>
        <end position="274"/>
    </location>
</feature>
<feature type="disulfide bond" evidence="2">
    <location>
        <begin position="293"/>
        <end position="369"/>
    </location>
</feature>
<feature type="disulfide bond" evidence="2">
    <location>
        <begin position="469"/>
        <end position="486"/>
    </location>
</feature>
<feature type="mutagenesis site" description="In s294; reduced activity. Absence of muscle pioneer cells and reduced population of superficial slow fibers. Impaired intestinal lumen fusion, absence of differentiated smooth muscle surrounding the intestine, mislocalization of rab11a and increased expression of rab11 effector proteins." evidence="16 19">
    <original>C</original>
    <variation>Y</variation>
    <location>
        <position position="125"/>
    </location>
</feature>
<feature type="mutagenesis site" description="In b641; recessive lethal mutation which results in reduced expression of nkx2.2 and ptch1, bulky U-shaped somites, ventral body curvature, reduced ventral forebrain and interocular distance, reduced dorsoventral extent of posterior diencephalon and spinal cord, poorly differentiated floor plate, abnormal pituitary development, deformation of the exocrine pancreas, loss of ptch1 expression in the otic vesicle, otic vesicle anterioposterior patterning defects, and elevated olig2 expression in cerebellar neurons." evidence="8 9 10 11 14 20">
    <original>G</original>
    <variation>R</variation>
    <location>
        <position position="256"/>
    </location>
</feature>
<feature type="mutagenesis site" description="In b577; recessive lethal mutation which shows defective anterior craniofacial development and small dysmorphic improperly looped hearts with reduced numbers of cardiac cells." evidence="8 12 15">
    <original>R</original>
    <variation>L</variation>
    <location>
        <position position="379"/>
    </location>
</feature>
<feature type="sequence conflict" description="In Ref. 1; AAK37404." evidence="22" ref="1">
    <original>FT</original>
    <variation>LH</variation>
    <location>
        <begin position="226"/>
        <end position="227"/>
    </location>
</feature>
<feature type="strand" evidence="29">
    <location>
        <begin position="43"/>
        <end position="45"/>
    </location>
</feature>
<feature type="strand" evidence="29">
    <location>
        <begin position="54"/>
        <end position="56"/>
    </location>
</feature>
<feature type="strand" evidence="29">
    <location>
        <begin position="64"/>
        <end position="66"/>
    </location>
</feature>
<feature type="strand" evidence="28">
    <location>
        <begin position="68"/>
        <end position="70"/>
    </location>
</feature>
<feature type="helix" evidence="29">
    <location>
        <begin position="77"/>
        <end position="87"/>
    </location>
</feature>
<feature type="helix" evidence="29">
    <location>
        <begin position="88"/>
        <end position="92"/>
    </location>
</feature>
<feature type="helix" evidence="29">
    <location>
        <begin position="94"/>
        <end position="108"/>
    </location>
</feature>
<feature type="strand" evidence="29">
    <location>
        <begin position="116"/>
        <end position="118"/>
    </location>
</feature>
<feature type="helix" evidence="29">
    <location>
        <begin position="122"/>
        <end position="126"/>
    </location>
</feature>
<feature type="turn" evidence="29">
    <location>
        <begin position="127"/>
        <end position="132"/>
    </location>
</feature>
<feature type="helix" evidence="29">
    <location>
        <begin position="133"/>
        <end position="138"/>
    </location>
</feature>
<feature type="helix" evidence="29">
    <location>
        <begin position="143"/>
        <end position="145"/>
    </location>
</feature>
<feature type="turn" evidence="29">
    <location>
        <begin position="150"/>
        <end position="152"/>
    </location>
</feature>
<sequence length="822" mass="93059">MSSKRPCSIVGSFWMLWIWTATSMVARAVILHPNETIFNDFCKKSTTCEVLKYNTCLGSPLPYTHTSLILAEDSETQEEAFEKLAMWSGLRNAPRCWAVIQPLLCAVYMPKCENGKVELPSQHLCQATRNPCSIVERERGWPNFLKCENKEQFPKGCQNEVQKLKFNTSGQCEAPLVKTDIQASWYKDVEGCGIQCDNPLFTEDEHSDMHSYIAVFGTITLLCTFFTLATFLADWKNSNRYPAVILFYVNACFFIGSIGWLAQFMDGARNEIVCKSDNTMRLGEPSSTETLSCVIIFVIVYYSLMSGVIWFVMLTYAWHTSFKALGTTHQPLSGKTSYFHLVTWSIPFILTVAILANSQVDADSVSGICFVGYRYYEYRAGFVLAPIGFVLVIGGYFLIRGVMTLFSIKSNHPGLLSEKAASKINETMLRLGIFGFLAFGFVLITFGCHFYDFFNQAEWERSFREYVLCEANVTIAHQTNKPIPECAIKNRPSLLVGKINLFSMFGTGIAMSTWVWTKATILIWKRTWFRIIGRSDDEPKRIKKSKMIAKAFSKRKELQKDPEKELSFSMHTVSHEGPVAGINFDLNEPSIEMSSAWAQHVTKMVARRGAILPQDISVTPTGTPIPPPEERNKLWMVEAEISPEMMKRKKKKKKRRKEVRPAGPAADEGNPAYHRREFGPSAVPRLPKLPGHRSLVANLWEQQRQQQEEQDMLPGAFPEFRPSCPLPYQDRYGGLGYLRNKPSSLPLANPLTLRDSMQGDLSHFQQSSWQPKGVFRHLGQEASMMDVGRTAVVPRADGRRGVQIHSRTNLMDAELLDADSDF</sequence>
<gene>
    <name evidence="25" type="primary">smo</name>
    <name evidence="21" type="synonym">smu</name>
</gene>
<protein>
    <recommendedName>
        <fullName evidence="22">Protein smoothened</fullName>
    </recommendedName>
</protein>
<organism>
    <name type="scientific">Danio rerio</name>
    <name type="common">Zebrafish</name>
    <name type="synonym">Brachydanio rerio</name>
    <dbReference type="NCBI Taxonomy" id="7955"/>
    <lineage>
        <taxon>Eukaryota</taxon>
        <taxon>Metazoa</taxon>
        <taxon>Chordata</taxon>
        <taxon>Craniata</taxon>
        <taxon>Vertebrata</taxon>
        <taxon>Euteleostomi</taxon>
        <taxon>Actinopterygii</taxon>
        <taxon>Neopterygii</taxon>
        <taxon>Teleostei</taxon>
        <taxon>Ostariophysi</taxon>
        <taxon>Cypriniformes</taxon>
        <taxon>Danionidae</taxon>
        <taxon>Danioninae</taxon>
        <taxon>Danio</taxon>
    </lineage>
</organism>